<gene>
    <name type="ordered locus">BMASAVP1_A0917</name>
</gene>
<evidence type="ECO:0000255" key="1">
    <source>
        <dbReference type="HAMAP-Rule" id="MF_00651"/>
    </source>
</evidence>
<keyword id="KW-0963">Cytoplasm</keyword>
<keyword id="KW-0378">Hydrolase</keyword>
<keyword id="KW-0540">Nuclease</keyword>
<keyword id="KW-0690">Ribosome biogenesis</keyword>
<proteinExistence type="inferred from homology"/>
<protein>
    <recommendedName>
        <fullName evidence="1">Putative pre-16S rRNA nuclease</fullName>
        <ecNumber evidence="1">3.1.-.-</ecNumber>
    </recommendedName>
</protein>
<accession>A1V204</accession>
<name>YQGF_BURMS</name>
<organism>
    <name type="scientific">Burkholderia mallei (strain SAVP1)</name>
    <dbReference type="NCBI Taxonomy" id="320388"/>
    <lineage>
        <taxon>Bacteria</taxon>
        <taxon>Pseudomonadati</taxon>
        <taxon>Pseudomonadota</taxon>
        <taxon>Betaproteobacteria</taxon>
        <taxon>Burkholderiales</taxon>
        <taxon>Burkholderiaceae</taxon>
        <taxon>Burkholderia</taxon>
        <taxon>pseudomallei group</taxon>
    </lineage>
</organism>
<feature type="chain" id="PRO_1000061495" description="Putative pre-16S rRNA nuclease">
    <location>
        <begin position="1"/>
        <end position="146"/>
    </location>
</feature>
<reference key="1">
    <citation type="journal article" date="2010" name="Genome Biol. Evol.">
        <title>Continuing evolution of Burkholderia mallei through genome reduction and large-scale rearrangements.</title>
        <authorList>
            <person name="Losada L."/>
            <person name="Ronning C.M."/>
            <person name="DeShazer D."/>
            <person name="Woods D."/>
            <person name="Fedorova N."/>
            <person name="Kim H.S."/>
            <person name="Shabalina S.A."/>
            <person name="Pearson T.R."/>
            <person name="Brinkac L."/>
            <person name="Tan P."/>
            <person name="Nandi T."/>
            <person name="Crabtree J."/>
            <person name="Badger J."/>
            <person name="Beckstrom-Sternberg S."/>
            <person name="Saqib M."/>
            <person name="Schutzer S.E."/>
            <person name="Keim P."/>
            <person name="Nierman W.C."/>
        </authorList>
    </citation>
    <scope>NUCLEOTIDE SEQUENCE [LARGE SCALE GENOMIC DNA]</scope>
    <source>
        <strain>SAVP1</strain>
    </source>
</reference>
<comment type="function">
    <text evidence="1">Could be a nuclease involved in processing of the 5'-end of pre-16S rRNA.</text>
</comment>
<comment type="subcellular location">
    <subcellularLocation>
        <location evidence="1">Cytoplasm</location>
    </subcellularLocation>
</comment>
<comment type="similarity">
    <text evidence="1">Belongs to the YqgF nuclease family.</text>
</comment>
<dbReference type="EC" id="3.1.-.-" evidence="1"/>
<dbReference type="EMBL" id="CP000526">
    <property type="protein sequence ID" value="ABM50676.1"/>
    <property type="molecule type" value="Genomic_DNA"/>
</dbReference>
<dbReference type="SMR" id="A1V204"/>
<dbReference type="KEGG" id="bmv:BMASAVP1_A0917"/>
<dbReference type="HOGENOM" id="CLU_098240_3_2_4"/>
<dbReference type="GO" id="GO:0005829">
    <property type="term" value="C:cytosol"/>
    <property type="evidence" value="ECO:0007669"/>
    <property type="project" value="TreeGrafter"/>
</dbReference>
<dbReference type="GO" id="GO:0004518">
    <property type="term" value="F:nuclease activity"/>
    <property type="evidence" value="ECO:0007669"/>
    <property type="project" value="UniProtKB-KW"/>
</dbReference>
<dbReference type="GO" id="GO:0000967">
    <property type="term" value="P:rRNA 5'-end processing"/>
    <property type="evidence" value="ECO:0007669"/>
    <property type="project" value="UniProtKB-UniRule"/>
</dbReference>
<dbReference type="CDD" id="cd16964">
    <property type="entry name" value="YqgF"/>
    <property type="match status" value="1"/>
</dbReference>
<dbReference type="Gene3D" id="3.30.420.140">
    <property type="entry name" value="YqgF/RNase H-like domain"/>
    <property type="match status" value="1"/>
</dbReference>
<dbReference type="HAMAP" id="MF_00651">
    <property type="entry name" value="Nuclease_YqgF"/>
    <property type="match status" value="1"/>
</dbReference>
<dbReference type="InterPro" id="IPR012337">
    <property type="entry name" value="RNaseH-like_sf"/>
</dbReference>
<dbReference type="InterPro" id="IPR005227">
    <property type="entry name" value="YqgF"/>
</dbReference>
<dbReference type="InterPro" id="IPR006641">
    <property type="entry name" value="YqgF/RNaseH-like_dom"/>
</dbReference>
<dbReference type="InterPro" id="IPR037027">
    <property type="entry name" value="YqgF/RNaseH-like_dom_sf"/>
</dbReference>
<dbReference type="NCBIfam" id="TIGR00250">
    <property type="entry name" value="RNAse_H_YqgF"/>
    <property type="match status" value="1"/>
</dbReference>
<dbReference type="PANTHER" id="PTHR33317">
    <property type="entry name" value="POLYNUCLEOTIDYL TRANSFERASE, RIBONUCLEASE H-LIKE SUPERFAMILY PROTEIN"/>
    <property type="match status" value="1"/>
</dbReference>
<dbReference type="PANTHER" id="PTHR33317:SF4">
    <property type="entry name" value="POLYNUCLEOTIDYL TRANSFERASE, RIBONUCLEASE H-LIKE SUPERFAMILY PROTEIN"/>
    <property type="match status" value="1"/>
</dbReference>
<dbReference type="Pfam" id="PF03652">
    <property type="entry name" value="RuvX"/>
    <property type="match status" value="1"/>
</dbReference>
<dbReference type="SMART" id="SM00732">
    <property type="entry name" value="YqgFc"/>
    <property type="match status" value="1"/>
</dbReference>
<dbReference type="SUPFAM" id="SSF53098">
    <property type="entry name" value="Ribonuclease H-like"/>
    <property type="match status" value="1"/>
</dbReference>
<sequence>MSAALSRDATLLAFDYGEKRIGVAVGNLLTRTARALVIVRNLNREHRFKAVGELIAEWKPDALVVGLPLHPDGAPHEMTQRAMRFGNQLNGRFNLPVSWVDERYSSVEARAGLRARGDAADRVDAEAARVILQQYLDGLPDHHEFN</sequence>